<dbReference type="EMBL" id="FN394217">
    <property type="protein sequence ID" value="CAY86801.1"/>
    <property type="molecule type" value="Genomic_DNA"/>
</dbReference>
<dbReference type="SMR" id="C8ZIM0"/>
<dbReference type="HOGENOM" id="CLU_385965_0_0_1"/>
<dbReference type="OrthoDB" id="36972at4893"/>
<dbReference type="Proteomes" id="UP000000286">
    <property type="component" value="Chromosome XVI, Scaffold EC1118_1P2"/>
</dbReference>
<dbReference type="GO" id="GO:0005935">
    <property type="term" value="C:cellular bud neck"/>
    <property type="evidence" value="ECO:0007669"/>
    <property type="project" value="UniProtKB-SubCell"/>
</dbReference>
<keyword id="KW-0597">Phosphoprotein</keyword>
<organism>
    <name type="scientific">Saccharomyces cerevisiae (strain Lalvin EC1118 / Prise de mousse)</name>
    <name type="common">Baker's yeast</name>
    <dbReference type="NCBI Taxonomy" id="643680"/>
    <lineage>
        <taxon>Eukaryota</taxon>
        <taxon>Fungi</taxon>
        <taxon>Dikarya</taxon>
        <taxon>Ascomycota</taxon>
        <taxon>Saccharomycotina</taxon>
        <taxon>Saccharomycetes</taxon>
        <taxon>Saccharomycetales</taxon>
        <taxon>Saccharomycetaceae</taxon>
        <taxon>Saccharomyces</taxon>
    </lineage>
</organism>
<name>AIM44_YEAS8</name>
<feature type="chain" id="PRO_0000408703" description="Altered inheritance of mitochondria protein 44">
    <location>
        <begin position="1"/>
        <end position="758"/>
    </location>
</feature>
<feature type="region of interest" description="Disordered" evidence="3">
    <location>
        <begin position="55"/>
        <end position="77"/>
    </location>
</feature>
<feature type="region of interest" description="Disordered" evidence="3">
    <location>
        <begin position="314"/>
        <end position="414"/>
    </location>
</feature>
<feature type="region of interest" description="Disordered" evidence="3">
    <location>
        <begin position="636"/>
        <end position="708"/>
    </location>
</feature>
<feature type="compositionally biased region" description="Low complexity" evidence="3">
    <location>
        <begin position="315"/>
        <end position="330"/>
    </location>
</feature>
<feature type="compositionally biased region" description="Polar residues" evidence="3">
    <location>
        <begin position="338"/>
        <end position="348"/>
    </location>
</feature>
<feature type="compositionally biased region" description="Polar residues" evidence="3">
    <location>
        <begin position="355"/>
        <end position="368"/>
    </location>
</feature>
<feature type="compositionally biased region" description="Polar residues" evidence="3">
    <location>
        <begin position="400"/>
        <end position="414"/>
    </location>
</feature>
<feature type="compositionally biased region" description="Acidic residues" evidence="3">
    <location>
        <begin position="651"/>
        <end position="689"/>
    </location>
</feature>
<feature type="compositionally biased region" description="Basic and acidic residues" evidence="3">
    <location>
        <begin position="690"/>
        <end position="705"/>
    </location>
</feature>
<feature type="modified residue" description="Phosphoserine" evidence="2">
    <location>
        <position position="25"/>
    </location>
</feature>
<reference key="1">
    <citation type="journal article" date="2009" name="Proc. Natl. Acad. Sci. U.S.A.">
        <title>Eukaryote-to-eukaryote gene transfer events revealed by the genome sequence of the wine yeast Saccharomyces cerevisiae EC1118.</title>
        <authorList>
            <person name="Novo M."/>
            <person name="Bigey F."/>
            <person name="Beyne E."/>
            <person name="Galeote V."/>
            <person name="Gavory F."/>
            <person name="Mallet S."/>
            <person name="Cambon B."/>
            <person name="Legras J.-L."/>
            <person name="Wincker P."/>
            <person name="Casaregola S."/>
            <person name="Dequin S."/>
        </authorList>
    </citation>
    <scope>NUCLEOTIDE SEQUENCE [LARGE SCALE GENOMIC DNA]</scope>
    <source>
        <strain>Lalvin EC1118 / Prise de mousse</strain>
    </source>
</reference>
<gene>
    <name type="primary">AIM44</name>
    <name type="ORF">EC1118_1P2_1321g</name>
</gene>
<accession>C8ZIM0</accession>
<comment type="subcellular location">
    <subcellularLocation>
        <location evidence="1">Bud neck</location>
    </subcellularLocation>
</comment>
<comment type="similarity">
    <text evidence="4">Belongs to the AIM44 family.</text>
</comment>
<sequence length="758" mass="84729">MIIRAPIRTKTKSFRGDQMDFKFPSNESLPRGTLEEYHLNNHHLLNDVFAAENGVSRDEDGNSQILSDYTSTSNTNTNSGYSSNGYYSFANISDNTTSSPRIVINQNETARLTSSDSNKSDFFASHDFPGNDSLHYSSSSVVKNQLHSMEAIPEGNITGSISTAFQTIPTADNVSYDIAPSSASSLLPRKSTSKSAILPSTQEAKPMTKLNMEKDIKTIELNNSVVPKPKKKLNRVPTIRRVESSRFSNSRYSSSVSSKSSSSRCSLKRSKAIRCKGGLLYYFTSLGIKIKKKLRKLRLVLRRRLFSYNVQKVPSATNSKTTKSKANINNKSKKRGTNLVNKNSNSTPRQKKSQRYVSNLQRSISSKSLVPVLAPQKKTKPLTVDTKFKANHPQSEDSKVGSNTPRSPLVSYTPSLRRTNSSIRRAASILTASATMTPANNKNSFISVPDNVSHAVTRNSSMYSRSRLVRSKPSTALNAIARQPSIVVENKVIPLSMNRYSIKEEDEYVIDTSSMRELSPVNSVCSSDYDRESSESYSNYADAMETTEVDNKDRVECNNEIQNVNANNEETSNEESYNLMKHYLSTVIAQRIMLRVQIARIQNNKSNVVYMNKSAETNSTIYEDLADSLLTEYEADGSSSQIFDGVSVRADEEEEEDEDDEDDEEEEEENDDEEDEEDEEDDEDDEEEEEKRKEGEGRNLAKEVDELAELSPMRKQSDLSITLRSPFAMLNSAYSNSIISLPTGVVKRSLTLPVGMKI</sequence>
<proteinExistence type="inferred from homology"/>
<protein>
    <recommendedName>
        <fullName>Altered inheritance of mitochondria protein 44</fullName>
    </recommendedName>
</protein>
<evidence type="ECO:0000250" key="1"/>
<evidence type="ECO:0000250" key="2">
    <source>
        <dbReference type="UniProtKB" id="Q99299"/>
    </source>
</evidence>
<evidence type="ECO:0000256" key="3">
    <source>
        <dbReference type="SAM" id="MobiDB-lite"/>
    </source>
</evidence>
<evidence type="ECO:0000305" key="4"/>